<feature type="chain" id="PRO_0000153707" description="Large ribosomal subunit protein eL20">
    <location>
        <begin position="1"/>
        <end position="77"/>
    </location>
</feature>
<protein>
    <recommendedName>
        <fullName evidence="1">Large ribosomal subunit protein eL20</fullName>
    </recommendedName>
    <alternativeName>
        <fullName evidence="2">50S ribosomal protein L18Ae</fullName>
    </alternativeName>
    <alternativeName>
        <fullName evidence="1">50S ribosomal protein L20e</fullName>
    </alternativeName>
    <alternativeName>
        <fullName evidence="1">50S ribosomal protein LX</fullName>
    </alternativeName>
</protein>
<reference key="1">
    <citation type="journal article" date="1998" name="DNA Res.">
        <title>Complete sequence and gene organization of the genome of a hyper-thermophilic archaebacterium, Pyrococcus horikoshii OT3.</title>
        <authorList>
            <person name="Kawarabayasi Y."/>
            <person name="Sawada M."/>
            <person name="Horikawa H."/>
            <person name="Haikawa Y."/>
            <person name="Hino Y."/>
            <person name="Yamamoto S."/>
            <person name="Sekine M."/>
            <person name="Baba S."/>
            <person name="Kosugi H."/>
            <person name="Hosoyama A."/>
            <person name="Nagai Y."/>
            <person name="Sakai M."/>
            <person name="Ogura K."/>
            <person name="Otsuka R."/>
            <person name="Nakazawa H."/>
            <person name="Takamiya M."/>
            <person name="Ohfuku Y."/>
            <person name="Funahashi T."/>
            <person name="Tanaka T."/>
            <person name="Kudoh Y."/>
            <person name="Yamazaki J."/>
            <person name="Kushida N."/>
            <person name="Oguchi A."/>
            <person name="Aoki K."/>
            <person name="Yoshizawa T."/>
            <person name="Nakamura Y."/>
            <person name="Robb F.T."/>
            <person name="Horikoshi K."/>
            <person name="Masuchi Y."/>
            <person name="Shizuya H."/>
            <person name="Kikuchi H."/>
        </authorList>
    </citation>
    <scope>NUCLEOTIDE SEQUENCE [LARGE SCALE GENOMIC DNA]</scope>
    <source>
        <strain>ATCC 700860 / DSM 12428 / JCM 9974 / NBRC 100139 / OT-3</strain>
    </source>
</reference>
<gene>
    <name evidence="1" type="primary">rpl18a</name>
    <name evidence="1" type="synonym">rpl20e</name>
    <name evidence="1" type="synonym">rplX</name>
    <name type="ordered locus">PH0527.1</name>
    <name type="ORF">PHS021</name>
</gene>
<dbReference type="EMBL" id="BA000001">
    <property type="protein sequence ID" value="BAA29616.1"/>
    <property type="molecule type" value="Genomic_DNA"/>
</dbReference>
<dbReference type="PIR" id="C71166">
    <property type="entry name" value="C71166"/>
</dbReference>
<dbReference type="RefSeq" id="WP_010884628.1">
    <property type="nucleotide sequence ID" value="NC_000961.1"/>
</dbReference>
<dbReference type="SMR" id="O73977"/>
<dbReference type="STRING" id="70601.gene:9377462"/>
<dbReference type="EnsemblBacteria" id="BAA29616">
    <property type="protein sequence ID" value="BAA29616"/>
    <property type="gene ID" value="BAA29616"/>
</dbReference>
<dbReference type="GeneID" id="1444415"/>
<dbReference type="KEGG" id="pho:PHS021"/>
<dbReference type="eggNOG" id="arCOG04175">
    <property type="taxonomic scope" value="Archaea"/>
</dbReference>
<dbReference type="OrthoDB" id="191241at2157"/>
<dbReference type="Proteomes" id="UP000000752">
    <property type="component" value="Chromosome"/>
</dbReference>
<dbReference type="GO" id="GO:1990904">
    <property type="term" value="C:ribonucleoprotein complex"/>
    <property type="evidence" value="ECO:0007669"/>
    <property type="project" value="UniProtKB-KW"/>
</dbReference>
<dbReference type="GO" id="GO:0005840">
    <property type="term" value="C:ribosome"/>
    <property type="evidence" value="ECO:0007669"/>
    <property type="project" value="UniProtKB-KW"/>
</dbReference>
<dbReference type="GO" id="GO:0070180">
    <property type="term" value="F:large ribosomal subunit rRNA binding"/>
    <property type="evidence" value="ECO:0007669"/>
    <property type="project" value="UniProtKB-UniRule"/>
</dbReference>
<dbReference type="GO" id="GO:0003735">
    <property type="term" value="F:structural constituent of ribosome"/>
    <property type="evidence" value="ECO:0007669"/>
    <property type="project" value="InterPro"/>
</dbReference>
<dbReference type="GO" id="GO:0006412">
    <property type="term" value="P:translation"/>
    <property type="evidence" value="ECO:0007669"/>
    <property type="project" value="UniProtKB-UniRule"/>
</dbReference>
<dbReference type="Gene3D" id="3.10.20.10">
    <property type="match status" value="1"/>
</dbReference>
<dbReference type="HAMAP" id="MF_00273">
    <property type="entry name" value="Ribosomal_eL20"/>
    <property type="match status" value="1"/>
</dbReference>
<dbReference type="InterPro" id="IPR028877">
    <property type="entry name" value="Ribosomal_eL20"/>
</dbReference>
<dbReference type="InterPro" id="IPR023573">
    <property type="entry name" value="Ribosomal_eL20_dom"/>
</dbReference>
<dbReference type="NCBIfam" id="NF001981">
    <property type="entry name" value="PRK00773.1-1"/>
    <property type="match status" value="1"/>
</dbReference>
<dbReference type="Pfam" id="PF01775">
    <property type="entry name" value="Ribosomal_L18A"/>
    <property type="match status" value="1"/>
</dbReference>
<dbReference type="SUPFAM" id="SSF160374">
    <property type="entry name" value="RplX-like"/>
    <property type="match status" value="1"/>
</dbReference>
<accession>O73977</accession>
<comment type="subunit">
    <text evidence="1">Part of the 50S ribosomal subunit. Binds 23S rRNA.</text>
</comment>
<comment type="similarity">
    <text evidence="1">Belongs to the eukaryotic ribosomal protein eL20 family.</text>
</comment>
<name>RL18A_PYRHO</name>
<evidence type="ECO:0000255" key="1">
    <source>
        <dbReference type="HAMAP-Rule" id="MF_00273"/>
    </source>
</evidence>
<evidence type="ECO:0000305" key="2"/>
<keyword id="KW-0687">Ribonucleoprotein</keyword>
<keyword id="KW-0689">Ribosomal protein</keyword>
<keyword id="KW-0694">RNA-binding</keyword>
<keyword id="KW-0699">rRNA-binding</keyword>
<organism>
    <name type="scientific">Pyrococcus horikoshii (strain ATCC 700860 / DSM 12428 / JCM 9974 / NBRC 100139 / OT-3)</name>
    <dbReference type="NCBI Taxonomy" id="70601"/>
    <lineage>
        <taxon>Archaea</taxon>
        <taxon>Methanobacteriati</taxon>
        <taxon>Methanobacteriota</taxon>
        <taxon>Thermococci</taxon>
        <taxon>Thermococcales</taxon>
        <taxon>Thermococcaceae</taxon>
        <taxon>Pyrococcus</taxon>
    </lineage>
</organism>
<sequence length="77" mass="9385">MEVKVFRVSGYFEKDGRKFKFTKEYRALKEEHVKELVYSDIGSRHKVKRRKIFIKEIREIKPEEAEDIVVRRLSLEL</sequence>
<proteinExistence type="inferred from homology"/>